<reference evidence="6" key="1">
    <citation type="journal article" date="1998" name="DNA Res.">
        <title>Complete sequence and gene organization of the genome of a hyper-thermophilic archaebacterium, Pyrococcus horikoshii OT3.</title>
        <authorList>
            <person name="Kawarabayasi Y."/>
            <person name="Sawada M."/>
            <person name="Horikawa H."/>
            <person name="Haikawa Y."/>
            <person name="Hino Y."/>
            <person name="Yamamoto S."/>
            <person name="Sekine M."/>
            <person name="Baba S."/>
            <person name="Kosugi H."/>
            <person name="Hosoyama A."/>
            <person name="Nagai Y."/>
            <person name="Sakai M."/>
            <person name="Ogura K."/>
            <person name="Otsuka R."/>
            <person name="Nakazawa H."/>
            <person name="Takamiya M."/>
            <person name="Ohfuku Y."/>
            <person name="Funahashi T."/>
            <person name="Tanaka T."/>
            <person name="Kudoh Y."/>
            <person name="Yamazaki J."/>
            <person name="Kushida N."/>
            <person name="Oguchi A."/>
            <person name="Aoki K."/>
            <person name="Yoshizawa T."/>
            <person name="Nakamura Y."/>
            <person name="Robb F.T."/>
            <person name="Horikoshi K."/>
            <person name="Masuchi Y."/>
            <person name="Shizuya H."/>
            <person name="Kikuchi H."/>
        </authorList>
    </citation>
    <scope>NUCLEOTIDE SEQUENCE [LARGE SCALE GENOMIC DNA]</scope>
    <source>
        <strain evidence="6">ATCC 700860 / DSM 12428 / JCM 9974 / NBRC 100139 / OT-3</strain>
    </source>
</reference>
<reference evidence="7" key="2">
    <citation type="journal article" date="2002" name="FEBS Lett.">
        <title>Structural insight into gene duplication, gene fusion and domain swapping in the evolution of PLP-independent amino acid racemases.</title>
        <authorList>
            <person name="Liu L."/>
            <person name="Iwata K."/>
            <person name="Yohda M."/>
            <person name="Miki K."/>
        </authorList>
    </citation>
    <scope>X-RAY CRYSTALLOGRAPHY (2.04 ANGSTROMS) OF 103-213</scope>
</reference>
<reference evidence="8" key="3">
    <citation type="journal article" date="2002" name="J. Mol. Biol.">
        <title>Crystal structure of aspartate racemase from Pyrococcus horikoshii OT3 and its implications for molecular mechanism of PLP-independent racemization.</title>
        <authorList>
            <person name="Liu L."/>
            <person name="Iwata K."/>
            <person name="Kita A."/>
            <person name="Kawarabayasi Y."/>
            <person name="Yohda M."/>
            <person name="Miki K."/>
        </authorList>
    </citation>
    <scope>X-RAY CRYSTALLOGRAPHY (1.90 ANGSTROMS)</scope>
    <scope>SUBUNIT</scope>
    <scope>DISULFIDE BOND</scope>
</reference>
<reference evidence="9" key="4">
    <citation type="journal article" date="2008" name="Proteins">
        <title>Structure of aspartate racemase complexed with a dual substrate analogue, citric acid, and implications for the reaction mechanism.</title>
        <authorList>
            <person name="Ohtaki A."/>
            <person name="Nakano Y."/>
            <person name="Iizuka R."/>
            <person name="Arakawa T."/>
            <person name="Yamada K."/>
            <person name="Odaka M."/>
            <person name="Yohda M."/>
        </authorList>
    </citation>
    <scope>X-RAY CRYSTALLOGRAPHY (2.00 ANGSTROMS) OF MUTANT ALA-82 IN COMPLEX WITH THE SUBSTRATE ANALOG CITRATE</scope>
    <scope>DISULFIDE BOND</scope>
    <scope>ACTIVE SITE</scope>
    <scope>CATALYTIC ACTIVITY</scope>
    <scope>BIOPHYSICOCHEMICAL PROPERTIES</scope>
    <scope>ACTIVITY REGULATION</scope>
    <scope>MUTAGENESIS OF CYS-82</scope>
</reference>
<evidence type="ECO:0000269" key="1">
    <source>
    </source>
</evidence>
<evidence type="ECO:0000269" key="2">
    <source>
    </source>
</evidence>
<evidence type="ECO:0000305" key="3"/>
<evidence type="ECO:0000305" key="4">
    <source>
    </source>
</evidence>
<evidence type="ECO:0000312" key="5">
    <source>
        <dbReference type="EMBL" id="BAA29761.1"/>
    </source>
</evidence>
<evidence type="ECO:0000312" key="6">
    <source>
        <dbReference type="Proteomes" id="UP000000752"/>
    </source>
</evidence>
<evidence type="ECO:0007744" key="7">
    <source>
        <dbReference type="PDB" id="1IU9"/>
    </source>
</evidence>
<evidence type="ECO:0007744" key="8">
    <source>
        <dbReference type="PDB" id="1JFL"/>
    </source>
</evidence>
<evidence type="ECO:0007744" key="9">
    <source>
        <dbReference type="PDB" id="2DX7"/>
    </source>
</evidence>
<evidence type="ECO:0007829" key="10">
    <source>
        <dbReference type="PDB" id="1JFL"/>
    </source>
</evidence>
<comment type="catalytic activity">
    <reaction evidence="2">
        <text>L-aspartate = D-aspartate</text>
        <dbReference type="Rhea" id="RHEA:14973"/>
        <dbReference type="ChEBI" id="CHEBI:29990"/>
        <dbReference type="ChEBI" id="CHEBI:29991"/>
        <dbReference type="EC" id="5.1.1.13"/>
    </reaction>
</comment>
<comment type="activity regulation">
    <text evidence="2">Weakly inhibited by citrate, but not by asparagine.</text>
</comment>
<comment type="biophysicochemical properties">
    <kinetics>
        <KM evidence="2">0.7 mM for L-aspartate</KM>
    </kinetics>
</comment>
<comment type="subunit">
    <text evidence="1 2 3">Homodimer. The existence of the interchain disulfide bond seen in the crystal structures is uncertain, but disulfide bonds have been reported for cytoplasmic proteins from thermophiles.</text>
</comment>
<comment type="similarity">
    <text evidence="3">Belongs to the aspartate/glutamate racemases family.</text>
</comment>
<accession>O58403</accession>
<dbReference type="EC" id="5.1.1.13" evidence="2"/>
<dbReference type="EMBL" id="BA000001">
    <property type="protein sequence ID" value="BAA29761.1"/>
    <property type="molecule type" value="Genomic_DNA"/>
</dbReference>
<dbReference type="PIR" id="G71112">
    <property type="entry name" value="G71112"/>
</dbReference>
<dbReference type="RefSeq" id="WP_010884762.1">
    <property type="nucleotide sequence ID" value="NC_000961.1"/>
</dbReference>
<dbReference type="PDB" id="1IU9">
    <property type="method" value="X-ray"/>
    <property type="resolution" value="2.04 A"/>
    <property type="chains" value="A=103-213"/>
</dbReference>
<dbReference type="PDB" id="1JFL">
    <property type="method" value="X-ray"/>
    <property type="resolution" value="1.90 A"/>
    <property type="chains" value="A/B=1-228"/>
</dbReference>
<dbReference type="PDB" id="2DX7">
    <property type="method" value="X-ray"/>
    <property type="resolution" value="2.00 A"/>
    <property type="chains" value="A/B=1-228"/>
</dbReference>
<dbReference type="PDBsum" id="1IU9"/>
<dbReference type="PDBsum" id="1JFL"/>
<dbReference type="PDBsum" id="2DX7"/>
<dbReference type="SMR" id="O58403"/>
<dbReference type="STRING" id="70601.gene:9377615"/>
<dbReference type="EnsemblBacteria" id="BAA29761">
    <property type="protein sequence ID" value="BAA29761"/>
    <property type="gene ID" value="BAA29761"/>
</dbReference>
<dbReference type="GeneID" id="1442997"/>
<dbReference type="KEGG" id="pho:PH0670"/>
<dbReference type="eggNOG" id="arCOG02006">
    <property type="taxonomic scope" value="Archaea"/>
</dbReference>
<dbReference type="OrthoDB" id="359449at2157"/>
<dbReference type="BRENDA" id="5.1.1.13">
    <property type="organism ID" value="5244"/>
</dbReference>
<dbReference type="SABIO-RK" id="O58403"/>
<dbReference type="EvolutionaryTrace" id="O58403"/>
<dbReference type="Proteomes" id="UP000000752">
    <property type="component" value="Chromosome"/>
</dbReference>
<dbReference type="GO" id="GO:0047689">
    <property type="term" value="F:aspartate racemase activity"/>
    <property type="evidence" value="ECO:0007669"/>
    <property type="project" value="UniProtKB-EC"/>
</dbReference>
<dbReference type="Gene3D" id="3.40.50.1860">
    <property type="match status" value="2"/>
</dbReference>
<dbReference type="InterPro" id="IPR015942">
    <property type="entry name" value="Asp/Glu/hydantoin_racemase"/>
</dbReference>
<dbReference type="InterPro" id="IPR001920">
    <property type="entry name" value="Asp/Glu_race"/>
</dbReference>
<dbReference type="InterPro" id="IPR018187">
    <property type="entry name" value="Asp/Glu_racemase_AS_1"/>
</dbReference>
<dbReference type="InterPro" id="IPR004380">
    <property type="entry name" value="Asp_race"/>
</dbReference>
<dbReference type="NCBIfam" id="TIGR00035">
    <property type="entry name" value="asp_race"/>
    <property type="match status" value="1"/>
</dbReference>
<dbReference type="PANTHER" id="PTHR21198:SF7">
    <property type="entry name" value="ASPARTATE-GLUTAMATE RACEMASE FAMILY"/>
    <property type="match status" value="1"/>
</dbReference>
<dbReference type="PANTHER" id="PTHR21198">
    <property type="entry name" value="GLUTAMATE RACEMASE"/>
    <property type="match status" value="1"/>
</dbReference>
<dbReference type="Pfam" id="PF01177">
    <property type="entry name" value="Asp_Glu_race"/>
    <property type="match status" value="1"/>
</dbReference>
<dbReference type="SUPFAM" id="SSF53681">
    <property type="entry name" value="Aspartate/glutamate racemase"/>
    <property type="match status" value="2"/>
</dbReference>
<dbReference type="PROSITE" id="PS00923">
    <property type="entry name" value="ASP_GLU_RACEMASE_1"/>
    <property type="match status" value="1"/>
</dbReference>
<dbReference type="PROSITE" id="PS00924">
    <property type="entry name" value="ASP_GLU_RACEMASE_2"/>
    <property type="match status" value="1"/>
</dbReference>
<sequence>MKTIGILGGMGPLATAELFRRIVIKTPAKRDQEHPKVIIFNNPQIPDRTAYILGKGEDPRPQLIWTAKRLEECGADFIIMPCNTAHAFVEDIRKAIKIPIISMIEETAKKVKELGFKKAGLLATTGTIVSGVYEKEFSKYGVEIMTPTEDEQKDVMRGIYEGVKAGNLKLGRELLLKTAKILEERGAECIIAGCTEVSVVLKQDDLKVPLIDPMDVIAEVAVKVALEK</sequence>
<protein>
    <recommendedName>
        <fullName>Aspartate racemase</fullName>
        <ecNumber evidence="2">5.1.1.13</ecNumber>
    </recommendedName>
</protein>
<gene>
    <name evidence="5" type="ordered locus">PH0670</name>
</gene>
<organism evidence="5">
    <name type="scientific">Pyrococcus horikoshii (strain ATCC 700860 / DSM 12428 / JCM 9974 / NBRC 100139 / OT-3)</name>
    <dbReference type="NCBI Taxonomy" id="70601"/>
    <lineage>
        <taxon>Archaea</taxon>
        <taxon>Methanobacteriati</taxon>
        <taxon>Methanobacteriota</taxon>
        <taxon>Thermococci</taxon>
        <taxon>Thermococcales</taxon>
        <taxon>Thermococcaceae</taxon>
        <taxon>Pyrococcus</taxon>
    </lineage>
</organism>
<proteinExistence type="evidence at protein level"/>
<feature type="chain" id="PRO_0000433135" description="Aspartate racemase">
    <location>
        <begin position="1"/>
        <end position="228"/>
    </location>
</feature>
<feature type="active site" description="Proton donor/acceptor" evidence="4">
    <location>
        <position position="82"/>
    </location>
</feature>
<feature type="active site" description="Proton donor/acceptor" evidence="4">
    <location>
        <position position="194"/>
    </location>
</feature>
<feature type="binding site" evidence="4 9">
    <location>
        <begin position="47"/>
        <end position="49"/>
    </location>
    <ligand>
        <name>substrate</name>
    </ligand>
</feature>
<feature type="binding site" evidence="4 9">
    <location>
        <begin position="83"/>
        <end position="85"/>
    </location>
    <ligand>
        <name>substrate</name>
    </ligand>
</feature>
<feature type="binding site" evidence="4 9">
    <location>
        <position position="164"/>
    </location>
    <ligand>
        <name>substrate</name>
    </ligand>
</feature>
<feature type="disulfide bond" description="Interchain" evidence="4 8 9">
    <location>
        <position position="73"/>
    </location>
</feature>
<feature type="mutagenesis site" description="Abolishes racemase activity." evidence="2">
    <original>C</original>
    <variation>A</variation>
    <location>
        <position position="82"/>
    </location>
</feature>
<feature type="strand" evidence="10">
    <location>
        <begin position="4"/>
        <end position="8"/>
    </location>
</feature>
<feature type="helix" evidence="10">
    <location>
        <begin position="12"/>
        <end position="24"/>
    </location>
</feature>
<feature type="helix" evidence="10">
    <location>
        <begin position="31"/>
        <end position="33"/>
    </location>
</feature>
<feature type="strand" evidence="10">
    <location>
        <begin position="37"/>
        <end position="41"/>
    </location>
</feature>
<feature type="helix" evidence="10">
    <location>
        <begin position="48"/>
        <end position="52"/>
    </location>
</feature>
<feature type="helix" evidence="10">
    <location>
        <begin position="60"/>
        <end position="73"/>
    </location>
</feature>
<feature type="strand" evidence="10">
    <location>
        <begin position="76"/>
        <end position="79"/>
    </location>
</feature>
<feature type="helix" evidence="10">
    <location>
        <begin position="84"/>
        <end position="88"/>
    </location>
</feature>
<feature type="helix" evidence="10">
    <location>
        <begin position="89"/>
        <end position="95"/>
    </location>
</feature>
<feature type="helix" evidence="10">
    <location>
        <begin position="103"/>
        <end position="113"/>
    </location>
</feature>
<feature type="strand" evidence="10">
    <location>
        <begin position="117"/>
        <end position="122"/>
    </location>
</feature>
<feature type="helix" evidence="10">
    <location>
        <begin position="125"/>
        <end position="130"/>
    </location>
</feature>
<feature type="helix" evidence="10">
    <location>
        <begin position="132"/>
        <end position="139"/>
    </location>
</feature>
<feature type="strand" evidence="10">
    <location>
        <begin position="143"/>
        <end position="145"/>
    </location>
</feature>
<feature type="helix" evidence="10">
    <location>
        <begin position="149"/>
        <end position="160"/>
    </location>
</feature>
<feature type="helix" evidence="10">
    <location>
        <begin position="163"/>
        <end position="165"/>
    </location>
</feature>
<feature type="helix" evidence="10">
    <location>
        <begin position="168"/>
        <end position="184"/>
    </location>
</feature>
<feature type="strand" evidence="10">
    <location>
        <begin position="188"/>
        <end position="192"/>
    </location>
</feature>
<feature type="helix" evidence="10">
    <location>
        <begin position="195"/>
        <end position="200"/>
    </location>
</feature>
<feature type="helix" evidence="10">
    <location>
        <begin position="203"/>
        <end position="205"/>
    </location>
</feature>
<feature type="helix" evidence="10">
    <location>
        <begin position="213"/>
        <end position="226"/>
    </location>
</feature>
<keyword id="KW-0002">3D-structure</keyword>
<keyword id="KW-1015">Disulfide bond</keyword>
<keyword id="KW-0413">Isomerase</keyword>
<name>RACD_PYRHO</name>